<sequence>MTDLREKKRIAFFRGHSAERLAAFALMLKGFRIVARRYRTRLGEIDLIARRGDLVLIVEVKARASFEAAQFAVTPQAMRRIEAAADLWLQRQTDRARLSLRFDMVAVLPRRWPKHVPAFFTAGHYG</sequence>
<dbReference type="EMBL" id="CP000911">
    <property type="protein sequence ID" value="ABY37281.1"/>
    <property type="molecule type" value="Genomic_DNA"/>
</dbReference>
<dbReference type="RefSeq" id="WP_002965427.1">
    <property type="nucleotide sequence ID" value="NC_010169.1"/>
</dbReference>
<dbReference type="SMR" id="B0CJ37"/>
<dbReference type="KEGG" id="bmt:BSUIS_A0179"/>
<dbReference type="HOGENOM" id="CLU_115353_0_2_5"/>
<dbReference type="Proteomes" id="UP000008545">
    <property type="component" value="Chromosome I"/>
</dbReference>
<dbReference type="GO" id="GO:0003676">
    <property type="term" value="F:nucleic acid binding"/>
    <property type="evidence" value="ECO:0007669"/>
    <property type="project" value="InterPro"/>
</dbReference>
<dbReference type="Gene3D" id="3.40.1350.10">
    <property type="match status" value="1"/>
</dbReference>
<dbReference type="HAMAP" id="MF_00048">
    <property type="entry name" value="UPF0102"/>
    <property type="match status" value="1"/>
</dbReference>
<dbReference type="InterPro" id="IPR011335">
    <property type="entry name" value="Restrct_endonuc-II-like"/>
</dbReference>
<dbReference type="InterPro" id="IPR011856">
    <property type="entry name" value="tRNA_endonuc-like_dom_sf"/>
</dbReference>
<dbReference type="InterPro" id="IPR003509">
    <property type="entry name" value="UPF0102_YraN-like"/>
</dbReference>
<dbReference type="NCBIfam" id="NF009151">
    <property type="entry name" value="PRK12497.1-5"/>
    <property type="match status" value="1"/>
</dbReference>
<dbReference type="PANTHER" id="PTHR34039">
    <property type="entry name" value="UPF0102 PROTEIN YRAN"/>
    <property type="match status" value="1"/>
</dbReference>
<dbReference type="PANTHER" id="PTHR34039:SF1">
    <property type="entry name" value="UPF0102 PROTEIN YRAN"/>
    <property type="match status" value="1"/>
</dbReference>
<dbReference type="Pfam" id="PF02021">
    <property type="entry name" value="UPF0102"/>
    <property type="match status" value="1"/>
</dbReference>
<dbReference type="SUPFAM" id="SSF52980">
    <property type="entry name" value="Restriction endonuclease-like"/>
    <property type="match status" value="1"/>
</dbReference>
<accession>B0CJ37</accession>
<reference key="1">
    <citation type="submission" date="2007-12" db="EMBL/GenBank/DDBJ databases">
        <title>Brucella suis ATCC 23445 whole genome shotgun sequencing project.</title>
        <authorList>
            <person name="Setubal J.C."/>
            <person name="Bowns C."/>
            <person name="Boyle S."/>
            <person name="Crasta O.R."/>
            <person name="Czar M.J."/>
            <person name="Dharmanolla C."/>
            <person name="Gillespie J.J."/>
            <person name="Kenyon R.W."/>
            <person name="Lu J."/>
            <person name="Mane S."/>
            <person name="Mohapatra S."/>
            <person name="Nagrani S."/>
            <person name="Purkayastha A."/>
            <person name="Rajasimha H.K."/>
            <person name="Shallom J.M."/>
            <person name="Shallom S."/>
            <person name="Shukla M."/>
            <person name="Snyder E.E."/>
            <person name="Sobral B.W."/>
            <person name="Wattam A.R."/>
            <person name="Will R."/>
            <person name="Williams K."/>
            <person name="Yoo H."/>
            <person name="Bruce D."/>
            <person name="Detter C."/>
            <person name="Munk C."/>
            <person name="Brettin T.S."/>
        </authorList>
    </citation>
    <scope>NUCLEOTIDE SEQUENCE [LARGE SCALE GENOMIC DNA]</scope>
    <source>
        <strain>ATCC 23445 / NCTC 10510</strain>
    </source>
</reference>
<proteinExistence type="inferred from homology"/>
<comment type="similarity">
    <text evidence="1">Belongs to the UPF0102 family.</text>
</comment>
<feature type="chain" id="PRO_1000074805" description="UPF0102 protein BSUIS_A0179">
    <location>
        <begin position="1"/>
        <end position="126"/>
    </location>
</feature>
<name>Y179_BRUSI</name>
<organism>
    <name type="scientific">Brucella suis (strain ATCC 23445 / NCTC 10510)</name>
    <dbReference type="NCBI Taxonomy" id="470137"/>
    <lineage>
        <taxon>Bacteria</taxon>
        <taxon>Pseudomonadati</taxon>
        <taxon>Pseudomonadota</taxon>
        <taxon>Alphaproteobacteria</taxon>
        <taxon>Hyphomicrobiales</taxon>
        <taxon>Brucellaceae</taxon>
        <taxon>Brucella/Ochrobactrum group</taxon>
        <taxon>Brucella</taxon>
    </lineage>
</organism>
<protein>
    <recommendedName>
        <fullName evidence="1">UPF0102 protein BSUIS_A0179</fullName>
    </recommendedName>
</protein>
<gene>
    <name type="ordered locus">BSUIS_A0179</name>
</gene>
<evidence type="ECO:0000255" key="1">
    <source>
        <dbReference type="HAMAP-Rule" id="MF_00048"/>
    </source>
</evidence>